<dbReference type="EMBL" id="M91258">
    <property type="protein sequence ID" value="AAA48544.1"/>
    <property type="molecule type" value="Genomic_DNA"/>
</dbReference>
<dbReference type="SMR" id="P28107"/>
<dbReference type="GO" id="GO:0005615">
    <property type="term" value="C:extracellular space"/>
    <property type="evidence" value="ECO:0007669"/>
    <property type="project" value="TreeGrafter"/>
</dbReference>
<dbReference type="GO" id="GO:0005125">
    <property type="term" value="F:cytokine activity"/>
    <property type="evidence" value="ECO:0007669"/>
    <property type="project" value="TreeGrafter"/>
</dbReference>
<dbReference type="GO" id="GO:0005109">
    <property type="term" value="F:frizzled binding"/>
    <property type="evidence" value="ECO:0007669"/>
    <property type="project" value="TreeGrafter"/>
</dbReference>
<dbReference type="GO" id="GO:0060070">
    <property type="term" value="P:canonical Wnt signaling pathway"/>
    <property type="evidence" value="ECO:0007669"/>
    <property type="project" value="TreeGrafter"/>
</dbReference>
<dbReference type="GO" id="GO:0045165">
    <property type="term" value="P:cell fate commitment"/>
    <property type="evidence" value="ECO:0007669"/>
    <property type="project" value="TreeGrafter"/>
</dbReference>
<dbReference type="GO" id="GO:0030182">
    <property type="term" value="P:neuron differentiation"/>
    <property type="evidence" value="ECO:0007669"/>
    <property type="project" value="TreeGrafter"/>
</dbReference>
<dbReference type="InterPro" id="IPR005817">
    <property type="entry name" value="Wnt"/>
</dbReference>
<dbReference type="PANTHER" id="PTHR12027:SF84">
    <property type="entry name" value="PROTEIN WNT-9B"/>
    <property type="match status" value="1"/>
</dbReference>
<dbReference type="PANTHER" id="PTHR12027">
    <property type="entry name" value="WNT RELATED"/>
    <property type="match status" value="1"/>
</dbReference>
<dbReference type="Pfam" id="PF00110">
    <property type="entry name" value="wnt"/>
    <property type="match status" value="1"/>
</dbReference>
<dbReference type="SMART" id="SM00097">
    <property type="entry name" value="WNT1"/>
    <property type="match status" value="1"/>
</dbReference>
<feature type="chain" id="PRO_0000200660" description="Protein Wnt-9">
    <location>
        <begin position="1" status="less than"/>
        <end position="120" status="greater than"/>
    </location>
</feature>
<feature type="lipid moiety-binding region" description="O-palmitoleoyl serine; by PORCN" evidence="3">
    <location>
        <position position="1"/>
    </location>
</feature>
<feature type="disulfide bond" evidence="2">
    <location>
        <begin position="90"/>
        <end position="101"/>
    </location>
</feature>
<feature type="non-terminal residue">
    <location>
        <position position="1"/>
    </location>
</feature>
<feature type="non-terminal residue">
    <location>
        <position position="120"/>
    </location>
</feature>
<comment type="function">
    <text>Ligand for members of the frizzled family of seven transmembrane receptors. Probable developmental protein. May be a signaling molecule which affects the development of discrete regions of tissues. Is likely to signal over only few cell diameters.</text>
</comment>
<comment type="subcellular location">
    <subcellularLocation>
        <location>Secreted</location>
        <location>Extracellular space</location>
        <location>Extracellular matrix</location>
    </subcellularLocation>
</comment>
<comment type="PTM">
    <text evidence="1 3">Palmitoleoylation is required for efficient binding to frizzled receptors. Depalmitoleoylation leads to Wnt signaling pathway inhibition.</text>
</comment>
<comment type="similarity">
    <text evidence="4">Belongs to the Wnt family.</text>
</comment>
<name>WNT9_ALOVU</name>
<evidence type="ECO:0000250" key="1">
    <source>
        <dbReference type="UniProtKB" id="P27467"/>
    </source>
</evidence>
<evidence type="ECO:0000250" key="2">
    <source>
        <dbReference type="UniProtKB" id="P28026"/>
    </source>
</evidence>
<evidence type="ECO:0000250" key="3">
    <source>
        <dbReference type="UniProtKB" id="P56704"/>
    </source>
</evidence>
<evidence type="ECO:0000305" key="4"/>
<proteinExistence type="inferred from homology"/>
<keyword id="KW-0217">Developmental protein</keyword>
<keyword id="KW-1015">Disulfide bond</keyword>
<keyword id="KW-0272">Extracellular matrix</keyword>
<keyword id="KW-0449">Lipoprotein</keyword>
<keyword id="KW-0964">Secreted</keyword>
<keyword id="KW-0879">Wnt signaling pathway</keyword>
<accession>P28107</accession>
<gene>
    <name type="primary">WNT-9</name>
</gene>
<protein>
    <recommendedName>
        <fullName>Protein Wnt-9</fullName>
    </recommendedName>
</protein>
<reference key="1">
    <citation type="journal article" date="1992" name="Proc. Natl. Acad. Sci. U.S.A.">
        <title>Diversification of the Wnt gene family on the ancestral lineage of vertebrates.</title>
        <authorList>
            <person name="Sidow A."/>
        </authorList>
    </citation>
    <scope>NUCLEOTIDE SEQUENCE [GENOMIC DNA]</scope>
</reference>
<sequence length="120" mass="13396">SGSCAVRTCWKQLSSFHETGKLLKLKYETAVRVHSITNDATGETELISPKKHSYTLKNHIPRTTDLVYIEDSPNFCRPSKYSPGTAGRVCSKETNCESMCCGQGYNTQSLLVHRPCHCQV</sequence>
<organism>
    <name type="scientific">Alopias vulpinus</name>
    <name type="common">Common thresher shark</name>
    <name type="synonym">Squalus vulpinus</name>
    <dbReference type="NCBI Taxonomy" id="7852"/>
    <lineage>
        <taxon>Eukaryota</taxon>
        <taxon>Metazoa</taxon>
        <taxon>Chordata</taxon>
        <taxon>Craniata</taxon>
        <taxon>Vertebrata</taxon>
        <taxon>Chondrichthyes</taxon>
        <taxon>Elasmobranchii</taxon>
        <taxon>Galeomorphii</taxon>
        <taxon>Galeoidea</taxon>
        <taxon>Lamniformes</taxon>
        <taxon>Alopiidae</taxon>
        <taxon>Alopias</taxon>
    </lineage>
</organism>